<feature type="chain" id="PRO_1000191480" description="Lipid-A-disaccharide synthase">
    <location>
        <begin position="1"/>
        <end position="382"/>
    </location>
</feature>
<keyword id="KW-0328">Glycosyltransferase</keyword>
<keyword id="KW-0441">Lipid A biosynthesis</keyword>
<keyword id="KW-0444">Lipid biosynthesis</keyword>
<keyword id="KW-0443">Lipid metabolism</keyword>
<keyword id="KW-0808">Transferase</keyword>
<name>LPXB_ECOLU</name>
<proteinExistence type="inferred from homology"/>
<reference key="1">
    <citation type="journal article" date="2009" name="PLoS Genet.">
        <title>Organised genome dynamics in the Escherichia coli species results in highly diverse adaptive paths.</title>
        <authorList>
            <person name="Touchon M."/>
            <person name="Hoede C."/>
            <person name="Tenaillon O."/>
            <person name="Barbe V."/>
            <person name="Baeriswyl S."/>
            <person name="Bidet P."/>
            <person name="Bingen E."/>
            <person name="Bonacorsi S."/>
            <person name="Bouchier C."/>
            <person name="Bouvet O."/>
            <person name="Calteau A."/>
            <person name="Chiapello H."/>
            <person name="Clermont O."/>
            <person name="Cruveiller S."/>
            <person name="Danchin A."/>
            <person name="Diard M."/>
            <person name="Dossat C."/>
            <person name="Karoui M.E."/>
            <person name="Frapy E."/>
            <person name="Garry L."/>
            <person name="Ghigo J.M."/>
            <person name="Gilles A.M."/>
            <person name="Johnson J."/>
            <person name="Le Bouguenec C."/>
            <person name="Lescat M."/>
            <person name="Mangenot S."/>
            <person name="Martinez-Jehanne V."/>
            <person name="Matic I."/>
            <person name="Nassif X."/>
            <person name="Oztas S."/>
            <person name="Petit M.A."/>
            <person name="Pichon C."/>
            <person name="Rouy Z."/>
            <person name="Ruf C.S."/>
            <person name="Schneider D."/>
            <person name="Tourret J."/>
            <person name="Vacherie B."/>
            <person name="Vallenet D."/>
            <person name="Medigue C."/>
            <person name="Rocha E.P.C."/>
            <person name="Denamur E."/>
        </authorList>
    </citation>
    <scope>NUCLEOTIDE SEQUENCE [LARGE SCALE GENOMIC DNA]</scope>
    <source>
        <strain>UMN026 / ExPEC</strain>
    </source>
</reference>
<gene>
    <name evidence="1" type="primary">lpxB</name>
    <name type="ordered locus">ECUMN_0179</name>
</gene>
<accession>B7N849</accession>
<dbReference type="EC" id="2.4.1.182" evidence="1"/>
<dbReference type="EMBL" id="CU928163">
    <property type="protein sequence ID" value="CAR11399.1"/>
    <property type="molecule type" value="Genomic_DNA"/>
</dbReference>
<dbReference type="RefSeq" id="WP_000139685.1">
    <property type="nucleotide sequence ID" value="NC_011751.1"/>
</dbReference>
<dbReference type="RefSeq" id="YP_002410955.1">
    <property type="nucleotide sequence ID" value="NC_011751.1"/>
</dbReference>
<dbReference type="SMR" id="B7N849"/>
<dbReference type="STRING" id="585056.ECUMN_0179"/>
<dbReference type="CAZy" id="GT19">
    <property type="family name" value="Glycosyltransferase Family 19"/>
</dbReference>
<dbReference type="KEGG" id="eum:ECUMN_0179"/>
<dbReference type="PATRIC" id="fig|585056.7.peg.373"/>
<dbReference type="HOGENOM" id="CLU_036577_3_0_6"/>
<dbReference type="UniPathway" id="UPA00359">
    <property type="reaction ID" value="UER00481"/>
</dbReference>
<dbReference type="Proteomes" id="UP000007097">
    <property type="component" value="Chromosome"/>
</dbReference>
<dbReference type="GO" id="GO:0016020">
    <property type="term" value="C:membrane"/>
    <property type="evidence" value="ECO:0007669"/>
    <property type="project" value="GOC"/>
</dbReference>
<dbReference type="GO" id="GO:0008915">
    <property type="term" value="F:lipid-A-disaccharide synthase activity"/>
    <property type="evidence" value="ECO:0007669"/>
    <property type="project" value="UniProtKB-UniRule"/>
</dbReference>
<dbReference type="GO" id="GO:0005543">
    <property type="term" value="F:phospholipid binding"/>
    <property type="evidence" value="ECO:0007669"/>
    <property type="project" value="TreeGrafter"/>
</dbReference>
<dbReference type="GO" id="GO:0009245">
    <property type="term" value="P:lipid A biosynthetic process"/>
    <property type="evidence" value="ECO:0007669"/>
    <property type="project" value="UniProtKB-UniRule"/>
</dbReference>
<dbReference type="CDD" id="cd01635">
    <property type="entry name" value="Glycosyltransferase_GTB-type"/>
    <property type="match status" value="1"/>
</dbReference>
<dbReference type="HAMAP" id="MF_00392">
    <property type="entry name" value="LpxB"/>
    <property type="match status" value="1"/>
</dbReference>
<dbReference type="InterPro" id="IPR003835">
    <property type="entry name" value="Glyco_trans_19"/>
</dbReference>
<dbReference type="NCBIfam" id="TIGR00215">
    <property type="entry name" value="lpxB"/>
    <property type="match status" value="1"/>
</dbReference>
<dbReference type="PANTHER" id="PTHR30372">
    <property type="entry name" value="LIPID-A-DISACCHARIDE SYNTHASE"/>
    <property type="match status" value="1"/>
</dbReference>
<dbReference type="PANTHER" id="PTHR30372:SF4">
    <property type="entry name" value="LIPID-A-DISACCHARIDE SYNTHASE, MITOCHONDRIAL-RELATED"/>
    <property type="match status" value="1"/>
</dbReference>
<dbReference type="Pfam" id="PF02684">
    <property type="entry name" value="LpxB"/>
    <property type="match status" value="1"/>
</dbReference>
<dbReference type="SUPFAM" id="SSF53756">
    <property type="entry name" value="UDP-Glycosyltransferase/glycogen phosphorylase"/>
    <property type="match status" value="1"/>
</dbReference>
<protein>
    <recommendedName>
        <fullName evidence="1">Lipid-A-disaccharide synthase</fullName>
        <ecNumber evidence="1">2.4.1.182</ecNumber>
    </recommendedName>
</protein>
<organism>
    <name type="scientific">Escherichia coli O17:K52:H18 (strain UMN026 / ExPEC)</name>
    <dbReference type="NCBI Taxonomy" id="585056"/>
    <lineage>
        <taxon>Bacteria</taxon>
        <taxon>Pseudomonadati</taxon>
        <taxon>Pseudomonadota</taxon>
        <taxon>Gammaproteobacteria</taxon>
        <taxon>Enterobacterales</taxon>
        <taxon>Enterobacteriaceae</taxon>
        <taxon>Escherichia</taxon>
    </lineage>
</organism>
<evidence type="ECO:0000255" key="1">
    <source>
        <dbReference type="HAMAP-Rule" id="MF_00392"/>
    </source>
</evidence>
<sequence length="382" mass="42360">MTEQRPLTIALVAGETSGDILGAGLIRALKERVPNARFVGVAGPRMQAEGCEAWYEMEELAVMGIVEVLGRLRRLLHIRADLTTRFGELKPDVFVGIDAPDFNITLEGNLKKQGIKTIHYVSPSVWAWRQKRVFKIGRATDLVLAFLPFEKAFYDKYNVPCRFIGHTMADAMPLDPDKNGARDVLGIPHDAHCLALLPGSRGAEVEMLSADFLKTAQLLRQTYPDLEIVVPLVNAKRREQFERIKAEVAPDLSVHMLDGLGREAMVASDAALLASGTAALECMLAKCPMVVGYRMKPFTFWLAKRLVKTDYVSLPNLLAGRELVKELLQEECEPQKLAAALLPLLANGKTSHAMHDTFRELHQQIRCNADEQAAQAVLELAQ</sequence>
<comment type="function">
    <text evidence="1">Condensation of UDP-2,3-diacylglucosamine and 2,3-diacylglucosamine-1-phosphate to form lipid A disaccharide, a precursor of lipid A, a phosphorylated glycolipid that anchors the lipopolysaccharide to the outer membrane of the cell.</text>
</comment>
<comment type="catalytic activity">
    <reaction evidence="1">
        <text>2-N,3-O-bis[(3R)-3-hydroxytetradecanoyl]-alpha-D-glucosaminyl 1-phosphate + UDP-2-N,3-O-bis[(3R)-3-hydroxytetradecanoyl]-alpha-D-glucosamine = lipid A disaccharide (E. coli) + UDP + H(+)</text>
        <dbReference type="Rhea" id="RHEA:22668"/>
        <dbReference type="ChEBI" id="CHEBI:15378"/>
        <dbReference type="ChEBI" id="CHEBI:57957"/>
        <dbReference type="ChEBI" id="CHEBI:58223"/>
        <dbReference type="ChEBI" id="CHEBI:58466"/>
        <dbReference type="ChEBI" id="CHEBI:78847"/>
    </reaction>
</comment>
<comment type="catalytic activity">
    <reaction evidence="1">
        <text>a lipid X + a UDP-2-N,3-O-bis[(3R)-3-hydroxyacyl]-alpha-D-glucosamine = a lipid A disaccharide + UDP + H(+)</text>
        <dbReference type="Rhea" id="RHEA:67828"/>
        <dbReference type="ChEBI" id="CHEBI:15378"/>
        <dbReference type="ChEBI" id="CHEBI:58223"/>
        <dbReference type="ChEBI" id="CHEBI:137748"/>
        <dbReference type="ChEBI" id="CHEBI:176338"/>
        <dbReference type="ChEBI" id="CHEBI:176343"/>
        <dbReference type="EC" id="2.4.1.182"/>
    </reaction>
</comment>
<comment type="pathway">
    <text evidence="1">Glycolipid biosynthesis; lipid IV(A) biosynthesis; lipid IV(A) from (3R)-3-hydroxytetradecanoyl-[acyl-carrier-protein] and UDP-N-acetyl-alpha-D-glucosamine: step 5/6.</text>
</comment>
<comment type="similarity">
    <text evidence="1">Belongs to the LpxB family.</text>
</comment>